<proteinExistence type="inferred from homology"/>
<name>NU1C_CROS5</name>
<keyword id="KW-0472">Membrane</keyword>
<keyword id="KW-0520">NAD</keyword>
<keyword id="KW-0521">NADP</keyword>
<keyword id="KW-0618">Plastoquinone</keyword>
<keyword id="KW-0874">Quinone</keyword>
<keyword id="KW-1185">Reference proteome</keyword>
<keyword id="KW-0793">Thylakoid</keyword>
<keyword id="KW-1278">Translocase</keyword>
<keyword id="KW-0812">Transmembrane</keyword>
<keyword id="KW-1133">Transmembrane helix</keyword>
<feature type="chain" id="PRO_1000166625" description="NAD(P)H-quinone oxidoreductase subunit 1">
    <location>
        <begin position="1"/>
        <end position="372"/>
    </location>
</feature>
<feature type="transmembrane region" description="Helical" evidence="1">
    <location>
        <begin position="29"/>
        <end position="49"/>
    </location>
</feature>
<feature type="transmembrane region" description="Helical" evidence="1">
    <location>
        <begin position="97"/>
        <end position="117"/>
    </location>
</feature>
<feature type="transmembrane region" description="Helical" evidence="1">
    <location>
        <begin position="130"/>
        <end position="150"/>
    </location>
</feature>
<feature type="transmembrane region" description="Helical" evidence="1">
    <location>
        <begin position="176"/>
        <end position="196"/>
    </location>
</feature>
<feature type="transmembrane region" description="Helical" evidence="1">
    <location>
        <begin position="204"/>
        <end position="224"/>
    </location>
</feature>
<feature type="transmembrane region" description="Helical" evidence="1">
    <location>
        <begin position="254"/>
        <end position="274"/>
    </location>
</feature>
<feature type="transmembrane region" description="Helical" evidence="1">
    <location>
        <begin position="308"/>
        <end position="328"/>
    </location>
</feature>
<feature type="transmembrane region" description="Helical" evidence="1">
    <location>
        <begin position="347"/>
        <end position="367"/>
    </location>
</feature>
<reference key="1">
    <citation type="journal article" date="2008" name="Proc. Natl. Acad. Sci. U.S.A.">
        <title>The genome of Cyanothece 51142, a unicellular diazotrophic cyanobacterium important in the marine nitrogen cycle.</title>
        <authorList>
            <person name="Welsh E.A."/>
            <person name="Liberton M."/>
            <person name="Stoeckel J."/>
            <person name="Loh T."/>
            <person name="Elvitigala T."/>
            <person name="Wang C."/>
            <person name="Wollam A."/>
            <person name="Fulton R.S."/>
            <person name="Clifton S.W."/>
            <person name="Jacobs J.M."/>
            <person name="Aurora R."/>
            <person name="Ghosh B.K."/>
            <person name="Sherman L.A."/>
            <person name="Smith R.D."/>
            <person name="Wilson R.K."/>
            <person name="Pakrasi H.B."/>
        </authorList>
    </citation>
    <scope>NUCLEOTIDE SEQUENCE [LARGE SCALE GENOMIC DNA]</scope>
    <source>
        <strain>ATCC 51142 / BH68</strain>
    </source>
</reference>
<gene>
    <name evidence="1" type="primary">ndhA</name>
    <name type="ordered locus">cce_2224</name>
</gene>
<comment type="function">
    <text evidence="1">NDH-1 shuttles electrons from an unknown electron donor, via FMN and iron-sulfur (Fe-S) centers, to quinones in the respiratory and/or the photosynthetic chain. The immediate electron acceptor for the enzyme in this species is believed to be plastoquinone. Couples the redox reaction to proton translocation, and thus conserves the redox energy in a proton gradient.</text>
</comment>
<comment type="catalytic activity">
    <reaction evidence="1">
        <text>a plastoquinone + NADH + (n+1) H(+)(in) = a plastoquinol + NAD(+) + n H(+)(out)</text>
        <dbReference type="Rhea" id="RHEA:42608"/>
        <dbReference type="Rhea" id="RHEA-COMP:9561"/>
        <dbReference type="Rhea" id="RHEA-COMP:9562"/>
        <dbReference type="ChEBI" id="CHEBI:15378"/>
        <dbReference type="ChEBI" id="CHEBI:17757"/>
        <dbReference type="ChEBI" id="CHEBI:57540"/>
        <dbReference type="ChEBI" id="CHEBI:57945"/>
        <dbReference type="ChEBI" id="CHEBI:62192"/>
    </reaction>
</comment>
<comment type="catalytic activity">
    <reaction evidence="1">
        <text>a plastoquinone + NADPH + (n+1) H(+)(in) = a plastoquinol + NADP(+) + n H(+)(out)</text>
        <dbReference type="Rhea" id="RHEA:42612"/>
        <dbReference type="Rhea" id="RHEA-COMP:9561"/>
        <dbReference type="Rhea" id="RHEA-COMP:9562"/>
        <dbReference type="ChEBI" id="CHEBI:15378"/>
        <dbReference type="ChEBI" id="CHEBI:17757"/>
        <dbReference type="ChEBI" id="CHEBI:57783"/>
        <dbReference type="ChEBI" id="CHEBI:58349"/>
        <dbReference type="ChEBI" id="CHEBI:62192"/>
    </reaction>
</comment>
<comment type="subunit">
    <text evidence="1">NDH-1 is composed of at least 11 different subunits.</text>
</comment>
<comment type="subcellular location">
    <subcellularLocation>
        <location evidence="1">Cellular thylakoid membrane</location>
        <topology evidence="1">Multi-pass membrane protein</topology>
    </subcellularLocation>
</comment>
<comment type="similarity">
    <text evidence="1">Belongs to the complex I subunit 1 family.</text>
</comment>
<accession>B1WPK4</accession>
<dbReference type="EC" id="7.1.1.-" evidence="1"/>
<dbReference type="EMBL" id="CP000806">
    <property type="protein sequence ID" value="ACB51574.1"/>
    <property type="molecule type" value="Genomic_DNA"/>
</dbReference>
<dbReference type="RefSeq" id="WP_009546971.1">
    <property type="nucleotide sequence ID" value="NC_010546.1"/>
</dbReference>
<dbReference type="SMR" id="B1WPK4"/>
<dbReference type="STRING" id="43989.cce_2224"/>
<dbReference type="KEGG" id="cyt:cce_2224"/>
<dbReference type="eggNOG" id="COG1005">
    <property type="taxonomic scope" value="Bacteria"/>
</dbReference>
<dbReference type="HOGENOM" id="CLU_015134_0_1_3"/>
<dbReference type="OrthoDB" id="9803734at2"/>
<dbReference type="Proteomes" id="UP000001203">
    <property type="component" value="Chromosome circular"/>
</dbReference>
<dbReference type="GO" id="GO:0031676">
    <property type="term" value="C:plasma membrane-derived thylakoid membrane"/>
    <property type="evidence" value="ECO:0007669"/>
    <property type="project" value="UniProtKB-SubCell"/>
</dbReference>
<dbReference type="GO" id="GO:0003954">
    <property type="term" value="F:NADH dehydrogenase activity"/>
    <property type="evidence" value="ECO:0007669"/>
    <property type="project" value="TreeGrafter"/>
</dbReference>
<dbReference type="GO" id="GO:0016655">
    <property type="term" value="F:oxidoreductase activity, acting on NAD(P)H, quinone or similar compound as acceptor"/>
    <property type="evidence" value="ECO:0007669"/>
    <property type="project" value="UniProtKB-UniRule"/>
</dbReference>
<dbReference type="GO" id="GO:0048038">
    <property type="term" value="F:quinone binding"/>
    <property type="evidence" value="ECO:0007669"/>
    <property type="project" value="UniProtKB-KW"/>
</dbReference>
<dbReference type="GO" id="GO:0009060">
    <property type="term" value="P:aerobic respiration"/>
    <property type="evidence" value="ECO:0007669"/>
    <property type="project" value="TreeGrafter"/>
</dbReference>
<dbReference type="GO" id="GO:0019684">
    <property type="term" value="P:photosynthesis, light reaction"/>
    <property type="evidence" value="ECO:0007669"/>
    <property type="project" value="UniProtKB-UniRule"/>
</dbReference>
<dbReference type="HAMAP" id="MF_01350">
    <property type="entry name" value="NDH1_NuoH"/>
    <property type="match status" value="1"/>
</dbReference>
<dbReference type="InterPro" id="IPR001694">
    <property type="entry name" value="NADH_UbQ_OxRdtase_su1/FPO"/>
</dbReference>
<dbReference type="InterPro" id="IPR018086">
    <property type="entry name" value="NADH_UbQ_OxRdtase_su1_CS"/>
</dbReference>
<dbReference type="NCBIfam" id="NF004741">
    <property type="entry name" value="PRK06076.1-2"/>
    <property type="match status" value="1"/>
</dbReference>
<dbReference type="NCBIfam" id="NF004744">
    <property type="entry name" value="PRK06076.1-5"/>
    <property type="match status" value="1"/>
</dbReference>
<dbReference type="PANTHER" id="PTHR11432">
    <property type="entry name" value="NADH DEHYDROGENASE SUBUNIT 1"/>
    <property type="match status" value="1"/>
</dbReference>
<dbReference type="PANTHER" id="PTHR11432:SF3">
    <property type="entry name" value="NADH-UBIQUINONE OXIDOREDUCTASE CHAIN 1"/>
    <property type="match status" value="1"/>
</dbReference>
<dbReference type="Pfam" id="PF00146">
    <property type="entry name" value="NADHdh"/>
    <property type="match status" value="1"/>
</dbReference>
<dbReference type="PROSITE" id="PS00667">
    <property type="entry name" value="COMPLEX1_ND1_1"/>
    <property type="match status" value="1"/>
</dbReference>
<dbReference type="PROSITE" id="PS00668">
    <property type="entry name" value="COMPLEX1_ND1_2"/>
    <property type="match status" value="1"/>
</dbReference>
<evidence type="ECO:0000255" key="1">
    <source>
        <dbReference type="HAMAP-Rule" id="MF_01350"/>
    </source>
</evidence>
<sequence length="372" mass="40566">MNSGIDLQASFIESLNQLGIPSGAAKALWIPFPSFLMIIGATVGVLVVVWLERKISAAAQQRIGPEYAGPLGVLQPVADGIKLVFKEDVIPAKADPWLFTLGPVLVVLPVFVSYLIVPFGQNLVITDLNVGIFFWIALSSIAPIGLLMAGYASNNKYSLLGGLRAAAQSISYEIPLALSVLAIVMMSNSLSTIDIVEQQSGYGILGWNIWRQPVGFFIFWIAALAECERLPFDLPEAEEEIVAGYQTEYAGMKFALFYLGSYVNLVLSALVFAILYLGGWEFPVPLDKLAEWLGVSEDSSWLQVITASLGITMTVLKAYFLVFIAVLMRWTVPRVRIDQLLDLGWKFLLPVSLVNLLLTAALKLAFPVAFGG</sequence>
<protein>
    <recommendedName>
        <fullName evidence="1">NAD(P)H-quinone oxidoreductase subunit 1</fullName>
        <ecNumber evidence="1">7.1.1.-</ecNumber>
    </recommendedName>
    <alternativeName>
        <fullName evidence="1">NAD(P)H dehydrogenase I subunit 1</fullName>
    </alternativeName>
    <alternativeName>
        <fullName evidence="1">NDH-1 subunit 1</fullName>
    </alternativeName>
    <alternativeName>
        <fullName evidence="1">NDH-A</fullName>
    </alternativeName>
</protein>
<organism>
    <name type="scientific">Crocosphaera subtropica (strain ATCC 51142 / BH68)</name>
    <name type="common">Cyanothece sp. (strain ATCC 51142)</name>
    <dbReference type="NCBI Taxonomy" id="43989"/>
    <lineage>
        <taxon>Bacteria</taxon>
        <taxon>Bacillati</taxon>
        <taxon>Cyanobacteriota</taxon>
        <taxon>Cyanophyceae</taxon>
        <taxon>Oscillatoriophycideae</taxon>
        <taxon>Chroococcales</taxon>
        <taxon>Aphanothecaceae</taxon>
        <taxon>Crocosphaera</taxon>
        <taxon>Crocosphaera subtropica</taxon>
    </lineage>
</organism>